<reference key="1">
    <citation type="submission" date="2002-09" db="EMBL/GenBank/DDBJ databases">
        <title>Phylogenetic relationships among the major lineages of Asparagales based on a large chloroplast data set.</title>
        <authorList>
            <person name="McPherson M.A."/>
            <person name="Rai H.S."/>
            <person name="Wong W.A."/>
            <person name="Graham S.W."/>
        </authorList>
    </citation>
    <scope>NUCLEOTIDE SEQUENCE [GENOMIC DNA]</scope>
</reference>
<proteinExistence type="inferred from homology"/>
<name>PSBF_ASPOF</name>
<accession>Q67HB3</accession>
<dbReference type="EMBL" id="AY147585">
    <property type="protein sequence ID" value="AAN32441.1"/>
    <property type="molecule type" value="Genomic_DNA"/>
</dbReference>
<dbReference type="RefSeq" id="YP_009370037.1">
    <property type="nucleotide sequence ID" value="NC_034777.1"/>
</dbReference>
<dbReference type="SMR" id="Q67HB3"/>
<dbReference type="GeneID" id="33018192"/>
<dbReference type="GO" id="GO:0009535">
    <property type="term" value="C:chloroplast thylakoid membrane"/>
    <property type="evidence" value="ECO:0007669"/>
    <property type="project" value="UniProtKB-SubCell"/>
</dbReference>
<dbReference type="GO" id="GO:0009539">
    <property type="term" value="C:photosystem II reaction center"/>
    <property type="evidence" value="ECO:0007669"/>
    <property type="project" value="InterPro"/>
</dbReference>
<dbReference type="GO" id="GO:0009055">
    <property type="term" value="F:electron transfer activity"/>
    <property type="evidence" value="ECO:0007669"/>
    <property type="project" value="UniProtKB-UniRule"/>
</dbReference>
<dbReference type="GO" id="GO:0020037">
    <property type="term" value="F:heme binding"/>
    <property type="evidence" value="ECO:0007669"/>
    <property type="project" value="InterPro"/>
</dbReference>
<dbReference type="GO" id="GO:0005506">
    <property type="term" value="F:iron ion binding"/>
    <property type="evidence" value="ECO:0007669"/>
    <property type="project" value="UniProtKB-UniRule"/>
</dbReference>
<dbReference type="GO" id="GO:0009767">
    <property type="term" value="P:photosynthetic electron transport chain"/>
    <property type="evidence" value="ECO:0007669"/>
    <property type="project" value="InterPro"/>
</dbReference>
<dbReference type="HAMAP" id="MF_00643">
    <property type="entry name" value="PSII_PsbF"/>
    <property type="match status" value="1"/>
</dbReference>
<dbReference type="InterPro" id="IPR006241">
    <property type="entry name" value="PSII_cyt_b559_bsu"/>
</dbReference>
<dbReference type="InterPro" id="IPR006216">
    <property type="entry name" value="PSII_cyt_b559_CS"/>
</dbReference>
<dbReference type="InterPro" id="IPR013081">
    <property type="entry name" value="PSII_cyt_b559_N"/>
</dbReference>
<dbReference type="NCBIfam" id="TIGR01333">
    <property type="entry name" value="cyt_b559_beta"/>
    <property type="match status" value="1"/>
</dbReference>
<dbReference type="Pfam" id="PF00283">
    <property type="entry name" value="Cytochrom_B559"/>
    <property type="match status" value="1"/>
</dbReference>
<dbReference type="PIRSF" id="PIRSF000037">
    <property type="entry name" value="PsbF"/>
    <property type="match status" value="1"/>
</dbReference>
<dbReference type="SUPFAM" id="SSF161045">
    <property type="entry name" value="Cytochrome b559 subunits"/>
    <property type="match status" value="1"/>
</dbReference>
<dbReference type="PROSITE" id="PS00537">
    <property type="entry name" value="CYTOCHROME_B559"/>
    <property type="match status" value="1"/>
</dbReference>
<organism>
    <name type="scientific">Asparagus officinalis</name>
    <name type="common">Garden asparagus</name>
    <dbReference type="NCBI Taxonomy" id="4686"/>
    <lineage>
        <taxon>Eukaryota</taxon>
        <taxon>Viridiplantae</taxon>
        <taxon>Streptophyta</taxon>
        <taxon>Embryophyta</taxon>
        <taxon>Tracheophyta</taxon>
        <taxon>Spermatophyta</taxon>
        <taxon>Magnoliopsida</taxon>
        <taxon>Liliopsida</taxon>
        <taxon>Asparagales</taxon>
        <taxon>Asparagaceae</taxon>
        <taxon>Asparagoideae</taxon>
        <taxon>Asparagus</taxon>
    </lineage>
</organism>
<geneLocation type="chloroplast"/>
<sequence>MTIDRTYPIFTVRWLAVHGLAVPTVSFLGSISAMQFIQR</sequence>
<keyword id="KW-0150">Chloroplast</keyword>
<keyword id="KW-0249">Electron transport</keyword>
<keyword id="KW-0349">Heme</keyword>
<keyword id="KW-0408">Iron</keyword>
<keyword id="KW-0472">Membrane</keyword>
<keyword id="KW-0479">Metal-binding</keyword>
<keyword id="KW-0602">Photosynthesis</keyword>
<keyword id="KW-0604">Photosystem II</keyword>
<keyword id="KW-0934">Plastid</keyword>
<keyword id="KW-0793">Thylakoid</keyword>
<keyword id="KW-0812">Transmembrane</keyword>
<keyword id="KW-1133">Transmembrane helix</keyword>
<keyword id="KW-0813">Transport</keyword>
<comment type="function">
    <text evidence="1">This b-type cytochrome is tightly associated with the reaction center of photosystem II (PSII). PSII is a light-driven water:plastoquinone oxidoreductase that uses light energy to abstract electrons from H(2)O, generating O(2) and a proton gradient subsequently used for ATP formation. It consists of a core antenna complex that captures photons, and an electron transfer chain that converts photonic excitation into a charge separation.</text>
</comment>
<comment type="cofactor">
    <cofactor evidence="1">
        <name>heme b</name>
        <dbReference type="ChEBI" id="CHEBI:60344"/>
    </cofactor>
    <text evidence="1">With its partner (PsbE) binds heme. PSII binds additional chlorophylls, carotenoids and specific lipids.</text>
</comment>
<comment type="subunit">
    <text evidence="1">Heterodimer of an alpha subunit and a beta subunit. PSII is composed of 1 copy each of membrane proteins PsbA, PsbB, PsbC, PsbD, PsbE, PsbF, PsbH, PsbI, PsbJ, PsbK, PsbL, PsbM, PsbT, PsbX, PsbY, PsbZ, Psb30/Ycf12, at least 3 peripheral proteins of the oxygen-evolving complex and a large number of cofactors. It forms dimeric complexes.</text>
</comment>
<comment type="subcellular location">
    <subcellularLocation>
        <location evidence="1">Plastid</location>
        <location evidence="1">Chloroplast thylakoid membrane</location>
        <topology evidence="1">Single-pass membrane protein</topology>
    </subcellularLocation>
</comment>
<comment type="similarity">
    <text evidence="1">Belongs to the PsbE/PsbF family.</text>
</comment>
<feature type="chain" id="PRO_0000200358" description="Cytochrome b559 subunit beta">
    <location>
        <begin position="1"/>
        <end position="39"/>
    </location>
</feature>
<feature type="transmembrane region" description="Helical" evidence="1">
    <location>
        <begin position="14"/>
        <end position="30"/>
    </location>
</feature>
<feature type="binding site" description="axial binding residue" evidence="1">
    <location>
        <position position="18"/>
    </location>
    <ligand>
        <name>heme</name>
        <dbReference type="ChEBI" id="CHEBI:30413"/>
        <note>ligand shared with alpha subunit</note>
    </ligand>
    <ligandPart>
        <name>Fe</name>
        <dbReference type="ChEBI" id="CHEBI:18248"/>
    </ligandPart>
</feature>
<evidence type="ECO:0000255" key="1">
    <source>
        <dbReference type="HAMAP-Rule" id="MF_00643"/>
    </source>
</evidence>
<protein>
    <recommendedName>
        <fullName evidence="1">Cytochrome b559 subunit beta</fullName>
    </recommendedName>
    <alternativeName>
        <fullName evidence="1">PSII reaction center subunit VI</fullName>
    </alternativeName>
</protein>
<gene>
    <name evidence="1" type="primary">psbF</name>
</gene>